<name>ADP1_YEAST</name>
<dbReference type="EMBL" id="X59720">
    <property type="protein sequence ID" value="CAA42328.2"/>
    <property type="molecule type" value="Genomic_DNA"/>
</dbReference>
<dbReference type="EMBL" id="AY693056">
    <property type="protein sequence ID" value="AAT93075.1"/>
    <property type="molecule type" value="Genomic_DNA"/>
</dbReference>
<dbReference type="EMBL" id="BK006937">
    <property type="protein sequence ID" value="DAA07489.1"/>
    <property type="molecule type" value="Genomic_DNA"/>
</dbReference>
<dbReference type="PIR" id="S19421">
    <property type="entry name" value="S19421"/>
</dbReference>
<dbReference type="RefSeq" id="NP_009937.2">
    <property type="nucleotide sequence ID" value="NM_001178724.1"/>
</dbReference>
<dbReference type="SMR" id="P25371"/>
<dbReference type="BioGRID" id="30990">
    <property type="interactions" value="85"/>
</dbReference>
<dbReference type="DIP" id="DIP-1775N"/>
<dbReference type="FunCoup" id="P25371">
    <property type="interactions" value="439"/>
</dbReference>
<dbReference type="IntAct" id="P25371">
    <property type="interactions" value="41"/>
</dbReference>
<dbReference type="MINT" id="P25371"/>
<dbReference type="STRING" id="4932.YCR011C"/>
<dbReference type="TCDB" id="3.A.1.204.9">
    <property type="family name" value="the atp-binding cassette (abc) superfamily"/>
</dbReference>
<dbReference type="GlyCosmos" id="P25371">
    <property type="glycosylation" value="5 sites, No reported glycans"/>
</dbReference>
<dbReference type="GlyGen" id="P25371">
    <property type="glycosylation" value="5 sites"/>
</dbReference>
<dbReference type="iPTMnet" id="P25371"/>
<dbReference type="PaxDb" id="4932-YCR011C"/>
<dbReference type="PeptideAtlas" id="P25371"/>
<dbReference type="EnsemblFungi" id="YCR011C_mRNA">
    <property type="protein sequence ID" value="YCR011C"/>
    <property type="gene ID" value="YCR011C"/>
</dbReference>
<dbReference type="GeneID" id="850369"/>
<dbReference type="KEGG" id="sce:YCR011C"/>
<dbReference type="AGR" id="SGD:S000000604"/>
<dbReference type="SGD" id="S000000604">
    <property type="gene designation" value="ADP1"/>
</dbReference>
<dbReference type="VEuPathDB" id="FungiDB:YCR011C"/>
<dbReference type="eggNOG" id="KOG0061">
    <property type="taxonomic scope" value="Eukaryota"/>
</dbReference>
<dbReference type="GeneTree" id="ENSGT00940000165949"/>
<dbReference type="HOGENOM" id="CLU_000604_57_1_1"/>
<dbReference type="InParanoid" id="P25371"/>
<dbReference type="OMA" id="FNCQLDA"/>
<dbReference type="OrthoDB" id="66620at2759"/>
<dbReference type="BioCyc" id="YEAST:G3O-29328-MONOMER"/>
<dbReference type="Reactome" id="R-SCE-1369062">
    <property type="pathway name" value="ABC transporters in lipid homeostasis"/>
</dbReference>
<dbReference type="Reactome" id="R-SCE-1660661">
    <property type="pathway name" value="Sphingolipid de novo biosynthesis"/>
</dbReference>
<dbReference type="Reactome" id="R-SCE-189451">
    <property type="pathway name" value="Heme biosynthesis"/>
</dbReference>
<dbReference type="Reactome" id="R-SCE-189483">
    <property type="pathway name" value="Heme degradation"/>
</dbReference>
<dbReference type="Reactome" id="R-SCE-917937">
    <property type="pathway name" value="Iron uptake and transport"/>
</dbReference>
<dbReference type="Reactome" id="R-SCE-9753281">
    <property type="pathway name" value="Paracetamol ADME"/>
</dbReference>
<dbReference type="Reactome" id="R-SCE-9793528">
    <property type="pathway name" value="Ciprofloxacin ADME"/>
</dbReference>
<dbReference type="BioGRID-ORCS" id="850369">
    <property type="hits" value="0 hits in 10 CRISPR screens"/>
</dbReference>
<dbReference type="PRO" id="PR:P25371"/>
<dbReference type="Proteomes" id="UP000002311">
    <property type="component" value="Chromosome III"/>
</dbReference>
<dbReference type="RNAct" id="P25371">
    <property type="molecule type" value="protein"/>
</dbReference>
<dbReference type="GO" id="GO:0005737">
    <property type="term" value="C:cytoplasm"/>
    <property type="evidence" value="ECO:0007005"/>
    <property type="project" value="SGD"/>
</dbReference>
<dbReference type="GO" id="GO:0005783">
    <property type="term" value="C:endoplasmic reticulum"/>
    <property type="evidence" value="ECO:0007005"/>
    <property type="project" value="SGD"/>
</dbReference>
<dbReference type="GO" id="GO:0005789">
    <property type="term" value="C:endoplasmic reticulum membrane"/>
    <property type="evidence" value="ECO:0007669"/>
    <property type="project" value="UniProtKB-SubCell"/>
</dbReference>
<dbReference type="GO" id="GO:0000324">
    <property type="term" value="C:fungal-type vacuole"/>
    <property type="evidence" value="ECO:0007005"/>
    <property type="project" value="SGD"/>
</dbReference>
<dbReference type="GO" id="GO:0000329">
    <property type="term" value="C:fungal-type vacuole membrane"/>
    <property type="evidence" value="ECO:0007005"/>
    <property type="project" value="SGD"/>
</dbReference>
<dbReference type="GO" id="GO:0016020">
    <property type="term" value="C:membrane"/>
    <property type="evidence" value="ECO:0000318"/>
    <property type="project" value="GO_Central"/>
</dbReference>
<dbReference type="GO" id="GO:0140359">
    <property type="term" value="F:ABC-type transporter activity"/>
    <property type="evidence" value="ECO:0007669"/>
    <property type="project" value="InterPro"/>
</dbReference>
<dbReference type="GO" id="GO:0005524">
    <property type="term" value="F:ATP binding"/>
    <property type="evidence" value="ECO:0007669"/>
    <property type="project" value="UniProtKB-KW"/>
</dbReference>
<dbReference type="GO" id="GO:0016887">
    <property type="term" value="F:ATP hydrolysis activity"/>
    <property type="evidence" value="ECO:0007669"/>
    <property type="project" value="InterPro"/>
</dbReference>
<dbReference type="GO" id="GO:0042626">
    <property type="term" value="F:ATPase-coupled transmembrane transporter activity"/>
    <property type="evidence" value="ECO:0000250"/>
    <property type="project" value="SGD"/>
</dbReference>
<dbReference type="GO" id="GO:0055085">
    <property type="term" value="P:transmembrane transport"/>
    <property type="evidence" value="ECO:0000250"/>
    <property type="project" value="SGD"/>
</dbReference>
<dbReference type="CDD" id="cd03213">
    <property type="entry name" value="ABCG_EPDR"/>
    <property type="match status" value="1"/>
</dbReference>
<dbReference type="CDD" id="cd00055">
    <property type="entry name" value="EGF_Lam"/>
    <property type="match status" value="1"/>
</dbReference>
<dbReference type="FunFam" id="3.40.50.300:FF:000702">
    <property type="entry name" value="ABC transporter (Adp1)"/>
    <property type="match status" value="1"/>
</dbReference>
<dbReference type="Gene3D" id="3.40.50.300">
    <property type="entry name" value="P-loop containing nucleotide triphosphate hydrolases"/>
    <property type="match status" value="1"/>
</dbReference>
<dbReference type="InterPro" id="IPR003593">
    <property type="entry name" value="AAA+_ATPase"/>
</dbReference>
<dbReference type="InterPro" id="IPR013525">
    <property type="entry name" value="ABC2_TM"/>
</dbReference>
<dbReference type="InterPro" id="IPR003439">
    <property type="entry name" value="ABC_transporter-like_ATP-bd"/>
</dbReference>
<dbReference type="InterPro" id="IPR017871">
    <property type="entry name" value="ABC_transporter-like_CS"/>
</dbReference>
<dbReference type="InterPro" id="IPR043926">
    <property type="entry name" value="ABCG_dom"/>
</dbReference>
<dbReference type="InterPro" id="IPR000742">
    <property type="entry name" value="EGF-like_dom"/>
</dbReference>
<dbReference type="InterPro" id="IPR002049">
    <property type="entry name" value="LE_dom"/>
</dbReference>
<dbReference type="InterPro" id="IPR027417">
    <property type="entry name" value="P-loop_NTPase"/>
</dbReference>
<dbReference type="PANTHER" id="PTHR19241">
    <property type="entry name" value="ATP-BINDING CASSETTE TRANSPORTER"/>
    <property type="match status" value="1"/>
</dbReference>
<dbReference type="Pfam" id="PF01061">
    <property type="entry name" value="ABC2_membrane"/>
    <property type="match status" value="1"/>
</dbReference>
<dbReference type="Pfam" id="PF19055">
    <property type="entry name" value="ABC2_membrane_7"/>
    <property type="match status" value="1"/>
</dbReference>
<dbReference type="Pfam" id="PF00005">
    <property type="entry name" value="ABC_tran"/>
    <property type="match status" value="1"/>
</dbReference>
<dbReference type="SMART" id="SM00382">
    <property type="entry name" value="AAA"/>
    <property type="match status" value="1"/>
</dbReference>
<dbReference type="SUPFAM" id="SSF52540">
    <property type="entry name" value="P-loop containing nucleoside triphosphate hydrolases"/>
    <property type="match status" value="1"/>
</dbReference>
<dbReference type="PROSITE" id="PS00211">
    <property type="entry name" value="ABC_TRANSPORTER_1"/>
    <property type="match status" value="1"/>
</dbReference>
<dbReference type="PROSITE" id="PS50893">
    <property type="entry name" value="ABC_TRANSPORTER_2"/>
    <property type="match status" value="1"/>
</dbReference>
<proteinExistence type="evidence at protein level"/>
<organism>
    <name type="scientific">Saccharomyces cerevisiae (strain ATCC 204508 / S288c)</name>
    <name type="common">Baker's yeast</name>
    <dbReference type="NCBI Taxonomy" id="559292"/>
    <lineage>
        <taxon>Eukaryota</taxon>
        <taxon>Fungi</taxon>
        <taxon>Dikarya</taxon>
        <taxon>Ascomycota</taxon>
        <taxon>Saccharomycotina</taxon>
        <taxon>Saccharomycetes</taxon>
        <taxon>Saccharomycetales</taxon>
        <taxon>Saccharomycetaceae</taxon>
        <taxon>Saccharomyces</taxon>
    </lineage>
</organism>
<evidence type="ECO:0000255" key="1"/>
<evidence type="ECO:0000255" key="2">
    <source>
        <dbReference type="PROSITE-ProRule" id="PRU00434"/>
    </source>
</evidence>
<evidence type="ECO:0000269" key="3">
    <source>
    </source>
</evidence>
<evidence type="ECO:0000269" key="4">
    <source>
    </source>
</evidence>
<evidence type="ECO:0000305" key="5"/>
<evidence type="ECO:0007744" key="6">
    <source>
    </source>
</evidence>
<evidence type="ECO:0007744" key="7">
    <source>
    </source>
</evidence>
<keyword id="KW-0067">ATP-binding</keyword>
<keyword id="KW-0256">Endoplasmic reticulum</keyword>
<keyword id="KW-0325">Glycoprotein</keyword>
<keyword id="KW-0472">Membrane</keyword>
<keyword id="KW-0547">Nucleotide-binding</keyword>
<keyword id="KW-0597">Phosphoprotein</keyword>
<keyword id="KW-1185">Reference proteome</keyword>
<keyword id="KW-0732">Signal</keyword>
<keyword id="KW-0812">Transmembrane</keyword>
<keyword id="KW-1133">Transmembrane helix</keyword>
<keyword id="KW-0813">Transport</keyword>
<feature type="signal peptide" evidence="1">
    <location>
        <begin position="1"/>
        <end position="25"/>
    </location>
</feature>
<feature type="chain" id="PRO_0000000257" description="Probable ATP-dependent permease">
    <location>
        <begin position="26"/>
        <end position="1049"/>
    </location>
</feature>
<feature type="topological domain" description="Lumenal" evidence="1">
    <location>
        <begin position="26"/>
        <end position="324"/>
    </location>
</feature>
<feature type="transmembrane region" description="Helical" evidence="1">
    <location>
        <begin position="325"/>
        <end position="345"/>
    </location>
</feature>
<feature type="topological domain" description="Cytoplasmic" evidence="1">
    <location>
        <begin position="346"/>
        <end position="463"/>
    </location>
</feature>
<feature type="transmembrane region" description="Helical" evidence="1">
    <location>
        <begin position="464"/>
        <end position="481"/>
    </location>
</feature>
<feature type="topological domain" description="Lumenal" evidence="1">
    <location>
        <begin position="482"/>
        <end position="793"/>
    </location>
</feature>
<feature type="transmembrane region" description="Helical" evidence="1">
    <location>
        <begin position="794"/>
        <end position="814"/>
    </location>
</feature>
<feature type="topological domain" description="Cytoplasmic" evidence="1">
    <location>
        <begin position="815"/>
        <end position="828"/>
    </location>
</feature>
<feature type="transmembrane region" description="Helical" evidence="1">
    <location>
        <begin position="829"/>
        <end position="849"/>
    </location>
</feature>
<feature type="topological domain" description="Lumenal" evidence="1">
    <location>
        <begin position="850"/>
        <end position="877"/>
    </location>
</feature>
<feature type="transmembrane region" description="Helical" evidence="1">
    <location>
        <begin position="878"/>
        <end position="898"/>
    </location>
</feature>
<feature type="topological domain" description="Cytoplasmic" evidence="1">
    <location>
        <begin position="899"/>
        <end position="909"/>
    </location>
</feature>
<feature type="transmembrane region" description="Helical" evidence="1">
    <location>
        <begin position="910"/>
        <end position="930"/>
    </location>
</feature>
<feature type="topological domain" description="Lumenal" evidence="1">
    <location>
        <begin position="931"/>
        <end position="937"/>
    </location>
</feature>
<feature type="transmembrane region" description="Helical" evidence="1">
    <location>
        <begin position="938"/>
        <end position="958"/>
    </location>
</feature>
<feature type="topological domain" description="Cytoplasmic" evidence="1">
    <location>
        <begin position="959"/>
        <end position="1000"/>
    </location>
</feature>
<feature type="transmembrane region" description="Helical" evidence="1">
    <location>
        <begin position="1001"/>
        <end position="1021"/>
    </location>
</feature>
<feature type="topological domain" description="Lumenal" evidence="1">
    <location>
        <begin position="1022"/>
        <end position="1024"/>
    </location>
</feature>
<feature type="transmembrane region" description="Helical" evidence="1">
    <location>
        <begin position="1025"/>
        <end position="1045"/>
    </location>
</feature>
<feature type="topological domain" description="Cytoplasmic" evidence="1">
    <location>
        <begin position="1046"/>
        <end position="1049"/>
    </location>
</feature>
<feature type="domain" description="ABC transporter" evidence="2">
    <location>
        <begin position="384"/>
        <end position="631"/>
    </location>
</feature>
<feature type="domain" description="ABC transmembrane type-2">
    <location>
        <begin position="793"/>
        <end position="1044"/>
    </location>
</feature>
<feature type="binding site" evidence="2">
    <location>
        <begin position="423"/>
        <end position="430"/>
    </location>
    <ligand>
        <name>ATP</name>
        <dbReference type="ChEBI" id="CHEBI:30616"/>
    </ligand>
</feature>
<feature type="modified residue" description="Phosphoserine" evidence="6 7">
    <location>
        <position position="659"/>
    </location>
</feature>
<feature type="modified residue" description="Phosphoserine" evidence="6 7">
    <location>
        <position position="702"/>
    </location>
</feature>
<feature type="glycosylation site" description="N-linked (GlcNAc...) asparagine" evidence="1">
    <location>
        <position position="50"/>
    </location>
</feature>
<feature type="glycosylation site" description="N-linked (GlcNAc...) asparagine" evidence="1">
    <location>
        <position position="114"/>
    </location>
</feature>
<feature type="glycosylation site" description="N-linked (GlcNAc...) asparagine" evidence="1">
    <location>
        <position position="165"/>
    </location>
</feature>
<feature type="glycosylation site" description="N-linked (GlcNAc...) asparagine" evidence="1">
    <location>
        <position position="221"/>
    </location>
</feature>
<feature type="glycosylation site" description="N-linked (GlcNAc...) asparagine" evidence="1">
    <location>
        <position position="935"/>
    </location>
</feature>
<feature type="sequence conflict" description="In Ref. 1; no nucleotide entry." evidence="5" ref="1">
    <original>K</original>
    <variation>E</variation>
    <location>
        <position position="29"/>
    </location>
</feature>
<sequence length="1049" mass="117231">MGSHRRYLYYSILSFLLLSCSVVLAKQDKTPFFEGTSSKNSRLTAQDKGNDTCPPCFNCMLPIFECKQFSECNSYTGRCECIEGFAGDDCSLPLCGGLSPDESGNKDRPIRAQNDTCHCDNGWGGINCDVCQEDFVCDAFMPDPSIKGTCYKNGMIVDKVFSGCNVTNEKILQILNGKIPQITFACDKPNQECNFQFWIDQLESFYCGLSDCAFEYDLEQNTSHYKCNDVQCKCVPDTVLCGAKGSIDISDFLTETIKGPGDFSCDLETRQCKFSEPSMNDLILTVFGDPYITLKCESGECVHYSEIPGYKSPSKDPTVSWQGKLVLALTAVMVLALFTFATFYISKSPLFRNGLGSSKSPIRLPDEDAVNNFLQNEDDTLATLSFENITYSVPSINSDGVEETVLNEISGIVKPGQILAIMGGSGAGKTTLLDILAMKRKTGHVSGSIKVNGISMDRKSFSKIIGFVDQDDFLLPTLTVFETVLNSALLRLPKALSFEAKKARVYKVLEELRIIDIKDRIIGNEFDRGISGGEKRRVSIACELVTSPLVLFLDEPTSGLDASNANNVIECLVRLSSDYNRTLVLSIHQPRSNIFYLFDKLVLLSKGEMVYSGNAKKVSEFLRNEGYICPDNYNIADYLIDITFEAGPQGKRRRIRNISDLEAGTDTNDIDNTIHQTTFTSSDGTTQREWAHLAAHRDEIRSLLRDEEDVEGTDGRRGATEIDLNTKLLHDKYKDSVYYAELSQEIEEVLSEGDEESNVLNGDLPTGQQSAGFLQQLSILNSRSFKNMYRNPKLLLGNYLLTILLSLFLGTLYYNVSNDISGFQNRMGLFFFILTYFGFVTFTGLSSFALERIIFIKERSNNYYSPLAYYISKIMSEVVPLRVVPPILLSLIVYPMTGLNMKDNAFFKCIGILILFNLGISLEILTIGIIFEDLNNSIILSVLVLLGSLLFSGLFINTKNITNVAFKYLKNFSVFYYAYESLLINEVKTLMLKERKYGLNIEVPGATILSTFGFVVQNLVFDIKILALFNVVFLIMGYLALKWIVVEQK</sequence>
<reference key="1">
    <citation type="journal article" date="1991" name="Yeast">
        <title>The product of the YCR105 gene located on the chromosome III from Saccharomyces cerevisiae presents homologies to ATP-dependent permeases.</title>
        <authorList>
            <person name="Purnelle B."/>
            <person name="Skala J."/>
            <person name="Goffeau A."/>
        </authorList>
    </citation>
    <scope>NUCLEOTIDE SEQUENCE [GENOMIC DNA]</scope>
</reference>
<reference key="2">
    <citation type="journal article" date="1992" name="Yeast">
        <title>The complete sequence of a 10.8 kb segment distal of SUF2 on the right arm of chromosome III from Saccharomyces cerevisiae reveals seven open reading frames including the RVS161, ADP1 and PGK genes.</title>
        <authorList>
            <person name="Skala J."/>
            <person name="Purnelle B."/>
            <person name="Goffeau A."/>
        </authorList>
    </citation>
    <scope>NUCLEOTIDE SEQUENCE [GENOMIC DNA]</scope>
</reference>
<reference key="3">
    <citation type="journal article" date="1992" name="Nature">
        <title>The complete DNA sequence of yeast chromosome III.</title>
        <authorList>
            <person name="Oliver S.G."/>
            <person name="van der Aart Q.J.M."/>
            <person name="Agostoni-Carbone M.L."/>
            <person name="Aigle M."/>
            <person name="Alberghina L."/>
            <person name="Alexandraki D."/>
            <person name="Antoine G."/>
            <person name="Anwar R."/>
            <person name="Ballesta J.P.G."/>
            <person name="Benit P."/>
            <person name="Berben G."/>
            <person name="Bergantino E."/>
            <person name="Biteau N."/>
            <person name="Bolle P.-A."/>
            <person name="Bolotin-Fukuhara M."/>
            <person name="Brown A."/>
            <person name="Brown A.J.P."/>
            <person name="Buhler J.-M."/>
            <person name="Carcano C."/>
            <person name="Carignani G."/>
            <person name="Cederberg H."/>
            <person name="Chanet R."/>
            <person name="Contreras R."/>
            <person name="Crouzet M."/>
            <person name="Daignan-Fornier B."/>
            <person name="Defoor E."/>
            <person name="Delgado M.D."/>
            <person name="Demolder J."/>
            <person name="Doira C."/>
            <person name="Dubois E."/>
            <person name="Dujon B."/>
            <person name="Duesterhoeft A."/>
            <person name="Erdmann D."/>
            <person name="Esteban M."/>
            <person name="Fabre F."/>
            <person name="Fairhead C."/>
            <person name="Faye G."/>
            <person name="Feldmann H."/>
            <person name="Fiers W."/>
            <person name="Francingues-Gaillard M.-C."/>
            <person name="Franco L."/>
            <person name="Frontali L."/>
            <person name="Fukuhara H."/>
            <person name="Fuller L.J."/>
            <person name="Galland P."/>
            <person name="Gent M.E."/>
            <person name="Gigot D."/>
            <person name="Gilliquet V."/>
            <person name="Glansdorff N."/>
            <person name="Goffeau A."/>
            <person name="Grenson M."/>
            <person name="Grisanti P."/>
            <person name="Grivell L.A."/>
            <person name="de Haan M."/>
            <person name="Haasemann M."/>
            <person name="Hatat D."/>
            <person name="Hoenicka J."/>
            <person name="Hegemann J.H."/>
            <person name="Herbert C.J."/>
            <person name="Hilger F."/>
            <person name="Hohmann S."/>
            <person name="Hollenberg C.P."/>
            <person name="Huse K."/>
            <person name="Iborra F."/>
            <person name="Indge K.J."/>
            <person name="Isono K."/>
            <person name="Jacq C."/>
            <person name="Jacquet M."/>
            <person name="James C.M."/>
            <person name="Jauniaux J.-C."/>
            <person name="Jia Y."/>
            <person name="Jimenez A."/>
            <person name="Kelly A."/>
            <person name="Kleinhans U."/>
            <person name="Kreisl P."/>
            <person name="Lanfranchi G."/>
            <person name="Lewis C."/>
            <person name="van der Linden C.G."/>
            <person name="Lucchini G."/>
            <person name="Lutzenkirchen K."/>
            <person name="Maat M.J."/>
            <person name="Mallet L."/>
            <person name="Mannhaupt G."/>
            <person name="Martegani E."/>
            <person name="Mathieu A."/>
            <person name="Maurer C.T.C."/>
            <person name="McConnell D."/>
            <person name="McKee R.A."/>
            <person name="Messenguy F."/>
            <person name="Mewes H.-W."/>
            <person name="Molemans F."/>
            <person name="Montague M.A."/>
            <person name="Muzi Falconi M."/>
            <person name="Navas L."/>
            <person name="Newlon C.S."/>
            <person name="Noone D."/>
            <person name="Pallier C."/>
            <person name="Panzeri L."/>
            <person name="Pearson B.M."/>
            <person name="Perea J."/>
            <person name="Philippsen P."/>
            <person name="Pierard A."/>
            <person name="Planta R.J."/>
            <person name="Plevani P."/>
            <person name="Poetsch B."/>
            <person name="Pohl F.M."/>
            <person name="Purnelle B."/>
            <person name="Ramezani Rad M."/>
            <person name="Rasmussen S.W."/>
            <person name="Raynal A."/>
            <person name="Remacha M.A."/>
            <person name="Richterich P."/>
            <person name="Roberts A.B."/>
            <person name="Rodriguez F."/>
            <person name="Sanz E."/>
            <person name="Schaaff-Gerstenschlaeger I."/>
            <person name="Scherens B."/>
            <person name="Schweitzer B."/>
            <person name="Shu Y."/>
            <person name="Skala J."/>
            <person name="Slonimski P.P."/>
            <person name="Sor F."/>
            <person name="Soustelle C."/>
            <person name="Spiegelberg R."/>
            <person name="Stateva L.I."/>
            <person name="Steensma H.Y."/>
            <person name="Steiner S."/>
            <person name="Thierry A."/>
            <person name="Thireos G."/>
            <person name="Tzermia M."/>
            <person name="Urrestarazu L.A."/>
            <person name="Valle G."/>
            <person name="Vetter I."/>
            <person name="van Vliet-Reedijk J.C."/>
            <person name="Voet M."/>
            <person name="Volckaert G."/>
            <person name="Vreken P."/>
            <person name="Wang H."/>
            <person name="Warmington J.R."/>
            <person name="von Wettstein D."/>
            <person name="Wicksteed B.L."/>
            <person name="Wilson C."/>
            <person name="Wurst H."/>
            <person name="Xu G."/>
            <person name="Yoshikawa A."/>
            <person name="Zimmermann F.K."/>
            <person name="Sgouros J.G."/>
        </authorList>
    </citation>
    <scope>NUCLEOTIDE SEQUENCE [LARGE SCALE GENOMIC DNA]</scope>
    <source>
        <strain>ATCC 204508 / S288c</strain>
    </source>
</reference>
<reference key="4">
    <citation type="submission" date="2001-06" db="EMBL/GenBank/DDBJ databases">
        <authorList>
            <person name="Valles G."/>
            <person name="Volckaerts G."/>
        </authorList>
    </citation>
    <scope>SEQUENCE REVISION TO 29</scope>
</reference>
<reference key="5">
    <citation type="journal article" date="2014" name="G3 (Bethesda)">
        <title>The reference genome sequence of Saccharomyces cerevisiae: Then and now.</title>
        <authorList>
            <person name="Engel S.R."/>
            <person name="Dietrich F.S."/>
            <person name="Fisk D.G."/>
            <person name="Binkley G."/>
            <person name="Balakrishnan R."/>
            <person name="Costanzo M.C."/>
            <person name="Dwight S.S."/>
            <person name="Hitz B.C."/>
            <person name="Karra K."/>
            <person name="Nash R.S."/>
            <person name="Weng S."/>
            <person name="Wong E.D."/>
            <person name="Lloyd P."/>
            <person name="Skrzypek M.S."/>
            <person name="Miyasato S.R."/>
            <person name="Simison M."/>
            <person name="Cherry J.M."/>
        </authorList>
    </citation>
    <scope>GENOME REANNOTATION</scope>
    <source>
        <strain>ATCC 204508 / S288c</strain>
    </source>
</reference>
<reference key="6">
    <citation type="journal article" date="2007" name="Genome Res.">
        <title>Approaching a complete repository of sequence-verified protein-encoding clones for Saccharomyces cerevisiae.</title>
        <authorList>
            <person name="Hu Y."/>
            <person name="Rolfs A."/>
            <person name="Bhullar B."/>
            <person name="Murthy T.V.S."/>
            <person name="Zhu C."/>
            <person name="Berger M.F."/>
            <person name="Camargo A.A."/>
            <person name="Kelley F."/>
            <person name="McCarron S."/>
            <person name="Jepson D."/>
            <person name="Richardson A."/>
            <person name="Raphael J."/>
            <person name="Moreira D."/>
            <person name="Taycher E."/>
            <person name="Zuo D."/>
            <person name="Mohr S."/>
            <person name="Kane M.F."/>
            <person name="Williamson J."/>
            <person name="Simpson A.J.G."/>
            <person name="Bulyk M.L."/>
            <person name="Harlow E."/>
            <person name="Marsischky G."/>
            <person name="Kolodner R.D."/>
            <person name="LaBaer J."/>
        </authorList>
    </citation>
    <scope>NUCLEOTIDE SEQUENCE [GENOMIC DNA]</scope>
    <source>
        <strain>ATCC 204508 / S288c</strain>
    </source>
</reference>
<reference key="7">
    <citation type="journal article" date="2003" name="Nature">
        <title>Global analysis of protein localization in budding yeast.</title>
        <authorList>
            <person name="Huh W.-K."/>
            <person name="Falvo J.V."/>
            <person name="Gerke L.C."/>
            <person name="Carroll A.S."/>
            <person name="Howson R.W."/>
            <person name="Weissman J.S."/>
            <person name="O'Shea E.K."/>
        </authorList>
    </citation>
    <scope>SUBCELLULAR LOCATION [LARGE SCALE ANALYSIS]</scope>
</reference>
<reference key="8">
    <citation type="journal article" date="2003" name="Nature">
        <title>Global analysis of protein expression in yeast.</title>
        <authorList>
            <person name="Ghaemmaghami S."/>
            <person name="Huh W.-K."/>
            <person name="Bower K."/>
            <person name="Howson R.W."/>
            <person name="Belle A."/>
            <person name="Dephoure N."/>
            <person name="O'Shea E.K."/>
            <person name="Weissman J.S."/>
        </authorList>
    </citation>
    <scope>LEVEL OF PROTEIN EXPRESSION [LARGE SCALE ANALYSIS]</scope>
</reference>
<reference key="9">
    <citation type="journal article" date="2006" name="Proc. Natl. Acad. Sci. U.S.A.">
        <title>A global topology map of the Saccharomyces cerevisiae membrane proteome.</title>
        <authorList>
            <person name="Kim H."/>
            <person name="Melen K."/>
            <person name="Oesterberg M."/>
            <person name="von Heijne G."/>
        </authorList>
    </citation>
    <scope>TOPOLOGY [LARGE SCALE ANALYSIS]</scope>
    <source>
        <strain>ATCC 208353 / W303-1A</strain>
    </source>
</reference>
<reference key="10">
    <citation type="journal article" date="2008" name="Mol. Cell. Proteomics">
        <title>A multidimensional chromatography technology for in-depth phosphoproteome analysis.</title>
        <authorList>
            <person name="Albuquerque C.P."/>
            <person name="Smolka M.B."/>
            <person name="Payne S.H."/>
            <person name="Bafna V."/>
            <person name="Eng J."/>
            <person name="Zhou H."/>
        </authorList>
    </citation>
    <scope>PHOSPHORYLATION [LARGE SCALE ANALYSIS] AT SER-659 AND SER-702</scope>
    <scope>IDENTIFICATION BY MASS SPECTROMETRY [LARGE SCALE ANALYSIS]</scope>
</reference>
<reference key="11">
    <citation type="journal article" date="2009" name="Science">
        <title>Global analysis of Cdk1 substrate phosphorylation sites provides insights into evolution.</title>
        <authorList>
            <person name="Holt L.J."/>
            <person name="Tuch B.B."/>
            <person name="Villen J."/>
            <person name="Johnson A.D."/>
            <person name="Gygi S.P."/>
            <person name="Morgan D.O."/>
        </authorList>
    </citation>
    <scope>PHOSPHORYLATION [LARGE SCALE ANALYSIS] AT SER-659 AND SER-702</scope>
    <scope>IDENTIFICATION BY MASS SPECTROMETRY [LARGE SCALE ANALYSIS]</scope>
</reference>
<gene>
    <name type="primary">ADP1</name>
    <name type="ordered locus">YCR011C</name>
    <name type="ORF">YCR105</name>
    <name type="ORF">YCR11C</name>
</gene>
<protein>
    <recommendedName>
        <fullName>Probable ATP-dependent permease</fullName>
    </recommendedName>
</protein>
<comment type="subcellular location">
    <subcellularLocation>
        <location evidence="3">Endoplasmic reticulum membrane</location>
        <topology evidence="3">Multi-pass membrane protein</topology>
    </subcellularLocation>
</comment>
<comment type="miscellaneous">
    <text evidence="4">Present with 339 molecules/cell in log phase SD medium.</text>
</comment>
<comment type="similarity">
    <text evidence="5">Belongs to the ABC transporter superfamily. ABCG family. Eye pigment precursor importer (TC 3.A.1.204) subfamily.</text>
</comment>
<accession>P25371</accession>
<accession>D6VR20</accession>